<organism>
    <name type="scientific">Huso dauricus</name>
    <name type="common">Kaluga sturgeon</name>
    <name type="synonym">Acipenser dauricus</name>
    <dbReference type="NCBI Taxonomy" id="55293"/>
    <lineage>
        <taxon>Eukaryota</taxon>
        <taxon>Metazoa</taxon>
        <taxon>Chordata</taxon>
        <taxon>Craniata</taxon>
        <taxon>Vertebrata</taxon>
        <taxon>Euteleostomi</taxon>
        <taxon>Actinopterygii</taxon>
        <taxon>Chondrostei</taxon>
        <taxon>Acipenseriformes</taxon>
        <taxon>Acipenseridae</taxon>
        <taxon>Huso</taxon>
    </lineage>
</organism>
<evidence type="ECO:0000250" key="1"/>
<evidence type="ECO:0000255" key="2"/>
<evidence type="ECO:0000269" key="3">
    <source>
    </source>
</evidence>
<evidence type="ECO:0000303" key="4">
    <source>
    </source>
</evidence>
<evidence type="ECO:0000305" key="5"/>
<feature type="peptide" id="PRO_0000429401" description="Glucagon-3" evidence="3">
    <location>
        <begin position="1"/>
        <end position="31"/>
    </location>
</feature>
<comment type="function">
    <text evidence="1">Glucagon plays a key role in glucose metabolism and homeostasis. Regulates blood glucose by increasing gluconeogenesis and decreasing glycolysis (By similarity).</text>
</comment>
<comment type="subcellular location">
    <subcellularLocation>
        <location evidence="1">Secreted</location>
    </subcellularLocation>
</comment>
<comment type="induction">
    <text evidence="1">Produced in the A cells of the islets of Langerhans in response to a drop in blood sugar concentration.</text>
</comment>
<comment type="similarity">
    <text evidence="2">Belongs to the glucagon family.</text>
</comment>
<name>GLUC3_HUSDA</name>
<sequence length="31" mass="3717">HSQGMFTNDFSKYLEEEHAKEFVEWLKNGKS</sequence>
<reference evidence="5" key="1">
    <citation type="journal article" date="2000" name="Peptides">
        <title>Multiple molecular forms of glucagon and insulin in the kaluga sturgeon, Huso dauricus.</title>
        <authorList>
            <person name="Andoh T."/>
            <person name="Nagasawa H."/>
            <person name="Matsubara T."/>
        </authorList>
    </citation>
    <scope>PROTEIN SEQUENCE</scope>
    <source>
        <tissue evidence="3">Pancreas</tissue>
    </source>
</reference>
<accession>C0HJJ5</accession>
<dbReference type="SMR" id="C0HJJ5"/>
<dbReference type="GO" id="GO:0005576">
    <property type="term" value="C:extracellular region"/>
    <property type="evidence" value="ECO:0007669"/>
    <property type="project" value="UniProtKB-SubCell"/>
</dbReference>
<dbReference type="GO" id="GO:0005179">
    <property type="term" value="F:hormone activity"/>
    <property type="evidence" value="ECO:0007669"/>
    <property type="project" value="UniProtKB-KW"/>
</dbReference>
<dbReference type="Gene3D" id="6.10.250.590">
    <property type="match status" value="1"/>
</dbReference>
<dbReference type="InterPro" id="IPR000532">
    <property type="entry name" value="Glucagon_GIP_secretin_VIP"/>
</dbReference>
<dbReference type="Pfam" id="PF00123">
    <property type="entry name" value="Hormone_2"/>
    <property type="match status" value="1"/>
</dbReference>
<dbReference type="SMART" id="SM00070">
    <property type="entry name" value="GLUCA"/>
    <property type="match status" value="1"/>
</dbReference>
<dbReference type="PROSITE" id="PS00260">
    <property type="entry name" value="GLUCAGON"/>
    <property type="match status" value="1"/>
</dbReference>
<proteinExistence type="evidence at protein level"/>
<keyword id="KW-0903">Direct protein sequencing</keyword>
<keyword id="KW-0372">Hormone</keyword>
<keyword id="KW-0964">Secreted</keyword>
<protein>
    <recommendedName>
        <fullName>Glucagon-3</fullName>
    </recommendedName>
    <alternativeName>
        <fullName evidence="4">Glucagon-III</fullName>
    </alternativeName>
</protein>